<reference key="1">
    <citation type="submission" date="2007-09" db="EMBL/GenBank/DDBJ databases">
        <title>Complete genome sequencing of Rickettsia bellii.</title>
        <authorList>
            <person name="Madan A."/>
            <person name="Lee H."/>
            <person name="Madan A."/>
            <person name="Yoon J.-G."/>
            <person name="Ryu G.-Y."/>
            <person name="Dasch G."/>
            <person name="Ereemeva M."/>
        </authorList>
    </citation>
    <scope>NUCLEOTIDE SEQUENCE [LARGE SCALE GENOMIC DNA]</scope>
    <source>
        <strain>OSU 85-389</strain>
    </source>
</reference>
<feature type="chain" id="PRO_1000009565" description="tRNA-specific 2-thiouridylase MnmA">
    <location>
        <begin position="1"/>
        <end position="367"/>
    </location>
</feature>
<feature type="region of interest" description="Interaction with tRNA" evidence="1">
    <location>
        <begin position="154"/>
        <end position="156"/>
    </location>
</feature>
<feature type="active site" description="Nucleophile" evidence="1">
    <location>
        <position position="108"/>
    </location>
</feature>
<feature type="active site" description="Cysteine persulfide intermediate" evidence="1">
    <location>
        <position position="204"/>
    </location>
</feature>
<feature type="binding site" evidence="1">
    <location>
        <begin position="14"/>
        <end position="21"/>
    </location>
    <ligand>
        <name>ATP</name>
        <dbReference type="ChEBI" id="CHEBI:30616"/>
    </ligand>
</feature>
<feature type="binding site" evidence="1">
    <location>
        <position position="40"/>
    </location>
    <ligand>
        <name>ATP</name>
        <dbReference type="ChEBI" id="CHEBI:30616"/>
    </ligand>
</feature>
<feature type="binding site" evidence="1">
    <location>
        <position position="132"/>
    </location>
    <ligand>
        <name>ATP</name>
        <dbReference type="ChEBI" id="CHEBI:30616"/>
    </ligand>
</feature>
<feature type="site" description="Interaction with tRNA" evidence="1">
    <location>
        <position position="133"/>
    </location>
</feature>
<feature type="site" description="Interaction with tRNA" evidence="1">
    <location>
        <position position="344"/>
    </location>
</feature>
<feature type="disulfide bond" description="Alternate" evidence="1">
    <location>
        <begin position="108"/>
        <end position="204"/>
    </location>
</feature>
<comment type="function">
    <text evidence="1">Catalyzes the 2-thiolation of uridine at the wobble position (U34) of tRNA, leading to the formation of s(2)U34.</text>
</comment>
<comment type="catalytic activity">
    <reaction evidence="1">
        <text>S-sulfanyl-L-cysteinyl-[protein] + uridine(34) in tRNA + AH2 + ATP = 2-thiouridine(34) in tRNA + L-cysteinyl-[protein] + A + AMP + diphosphate + H(+)</text>
        <dbReference type="Rhea" id="RHEA:47032"/>
        <dbReference type="Rhea" id="RHEA-COMP:10131"/>
        <dbReference type="Rhea" id="RHEA-COMP:11726"/>
        <dbReference type="Rhea" id="RHEA-COMP:11727"/>
        <dbReference type="Rhea" id="RHEA-COMP:11728"/>
        <dbReference type="ChEBI" id="CHEBI:13193"/>
        <dbReference type="ChEBI" id="CHEBI:15378"/>
        <dbReference type="ChEBI" id="CHEBI:17499"/>
        <dbReference type="ChEBI" id="CHEBI:29950"/>
        <dbReference type="ChEBI" id="CHEBI:30616"/>
        <dbReference type="ChEBI" id="CHEBI:33019"/>
        <dbReference type="ChEBI" id="CHEBI:61963"/>
        <dbReference type="ChEBI" id="CHEBI:65315"/>
        <dbReference type="ChEBI" id="CHEBI:87170"/>
        <dbReference type="ChEBI" id="CHEBI:456215"/>
        <dbReference type="EC" id="2.8.1.13"/>
    </reaction>
</comment>
<comment type="subcellular location">
    <subcellularLocation>
        <location evidence="1">Cytoplasm</location>
    </subcellularLocation>
</comment>
<comment type="similarity">
    <text evidence="1">Belongs to the MnmA/TRMU family.</text>
</comment>
<gene>
    <name evidence="1" type="primary">mnmA</name>
    <name type="synonym">trmU</name>
    <name type="ordered locus">A1I_03045</name>
</gene>
<keyword id="KW-0067">ATP-binding</keyword>
<keyword id="KW-0963">Cytoplasm</keyword>
<keyword id="KW-1015">Disulfide bond</keyword>
<keyword id="KW-0547">Nucleotide-binding</keyword>
<keyword id="KW-0694">RNA-binding</keyword>
<keyword id="KW-0808">Transferase</keyword>
<keyword id="KW-0819">tRNA processing</keyword>
<keyword id="KW-0820">tRNA-binding</keyword>
<sequence>MINSNDRQSTLVVAMSGGVDSSVVAGILCEQGYNVIGITLQLYDHGMATAKKNACCAGQDIYDAKMVANKLGMPHYVLDYESKFKESVIDNFVDSYLRGETPLPCVQCNKSVKFRDLIKTAKELGADKLVTGHYVRKINGDNGPELHMGLDPLKDQSYFLFATTKEQLEYLDFPLGALTKDETRKLASKFGLEVADKPDSQDICFVPDGNYKNVINKIRPNASESGKILHINGFELGTHSGIINYTIGQRRGLGISYHEPLYVIKIDPNSNIVYVGPESALNVQEFVIKDVNWLAGSLKDGEKLEVSVKVRSTRPPRLAEISKLEGDRMKVKFLSEEKAVAPGQACVIYDGTRVLGGGWITRDVIPA</sequence>
<name>MNMA_RICB8</name>
<protein>
    <recommendedName>
        <fullName evidence="1">tRNA-specific 2-thiouridylase MnmA</fullName>
        <ecNumber evidence="1">2.8.1.13</ecNumber>
    </recommendedName>
</protein>
<evidence type="ECO:0000255" key="1">
    <source>
        <dbReference type="HAMAP-Rule" id="MF_00144"/>
    </source>
</evidence>
<accession>A8GVU7</accession>
<organism>
    <name type="scientific">Rickettsia bellii (strain OSU 85-389)</name>
    <dbReference type="NCBI Taxonomy" id="391896"/>
    <lineage>
        <taxon>Bacteria</taxon>
        <taxon>Pseudomonadati</taxon>
        <taxon>Pseudomonadota</taxon>
        <taxon>Alphaproteobacteria</taxon>
        <taxon>Rickettsiales</taxon>
        <taxon>Rickettsiaceae</taxon>
        <taxon>Rickettsieae</taxon>
        <taxon>Rickettsia</taxon>
        <taxon>belli group</taxon>
    </lineage>
</organism>
<proteinExistence type="inferred from homology"/>
<dbReference type="EC" id="2.8.1.13" evidence="1"/>
<dbReference type="EMBL" id="CP000849">
    <property type="protein sequence ID" value="ABV78974.1"/>
    <property type="molecule type" value="Genomic_DNA"/>
</dbReference>
<dbReference type="RefSeq" id="WP_011477203.1">
    <property type="nucleotide sequence ID" value="NC_009883.1"/>
</dbReference>
<dbReference type="SMR" id="A8GVU7"/>
<dbReference type="KEGG" id="rbo:A1I_03045"/>
<dbReference type="HOGENOM" id="CLU_035188_0_1_5"/>
<dbReference type="GO" id="GO:0005737">
    <property type="term" value="C:cytoplasm"/>
    <property type="evidence" value="ECO:0007669"/>
    <property type="project" value="UniProtKB-SubCell"/>
</dbReference>
<dbReference type="GO" id="GO:0005524">
    <property type="term" value="F:ATP binding"/>
    <property type="evidence" value="ECO:0007669"/>
    <property type="project" value="UniProtKB-KW"/>
</dbReference>
<dbReference type="GO" id="GO:0000049">
    <property type="term" value="F:tRNA binding"/>
    <property type="evidence" value="ECO:0007669"/>
    <property type="project" value="UniProtKB-KW"/>
</dbReference>
<dbReference type="GO" id="GO:0103016">
    <property type="term" value="F:tRNA-uridine 2-sulfurtransferase activity"/>
    <property type="evidence" value="ECO:0007669"/>
    <property type="project" value="UniProtKB-EC"/>
</dbReference>
<dbReference type="GO" id="GO:0002143">
    <property type="term" value="P:tRNA wobble position uridine thiolation"/>
    <property type="evidence" value="ECO:0007669"/>
    <property type="project" value="TreeGrafter"/>
</dbReference>
<dbReference type="CDD" id="cd01998">
    <property type="entry name" value="MnmA_TRMU-like"/>
    <property type="match status" value="1"/>
</dbReference>
<dbReference type="FunFam" id="2.30.30.280:FF:000001">
    <property type="entry name" value="tRNA-specific 2-thiouridylase MnmA"/>
    <property type="match status" value="1"/>
</dbReference>
<dbReference type="FunFam" id="2.40.30.10:FF:000127">
    <property type="entry name" value="tRNA-specific 2-thiouridylase MnmA"/>
    <property type="match status" value="1"/>
</dbReference>
<dbReference type="FunFam" id="3.40.50.620:FF:000115">
    <property type="entry name" value="tRNA-specific 2-thiouridylase MnmA"/>
    <property type="match status" value="1"/>
</dbReference>
<dbReference type="Gene3D" id="2.30.30.280">
    <property type="entry name" value="Adenine nucleotide alpha hydrolases-like domains"/>
    <property type="match status" value="1"/>
</dbReference>
<dbReference type="Gene3D" id="3.40.50.620">
    <property type="entry name" value="HUPs"/>
    <property type="match status" value="1"/>
</dbReference>
<dbReference type="Gene3D" id="2.40.30.10">
    <property type="entry name" value="Translation factors"/>
    <property type="match status" value="1"/>
</dbReference>
<dbReference type="HAMAP" id="MF_00144">
    <property type="entry name" value="tRNA_thiouridyl_MnmA"/>
    <property type="match status" value="1"/>
</dbReference>
<dbReference type="InterPro" id="IPR004506">
    <property type="entry name" value="MnmA-like"/>
</dbReference>
<dbReference type="InterPro" id="IPR046885">
    <property type="entry name" value="MnmA-like_C"/>
</dbReference>
<dbReference type="InterPro" id="IPR046884">
    <property type="entry name" value="MnmA-like_central"/>
</dbReference>
<dbReference type="InterPro" id="IPR023382">
    <property type="entry name" value="MnmA-like_central_sf"/>
</dbReference>
<dbReference type="InterPro" id="IPR014729">
    <property type="entry name" value="Rossmann-like_a/b/a_fold"/>
</dbReference>
<dbReference type="NCBIfam" id="NF001138">
    <property type="entry name" value="PRK00143.1"/>
    <property type="match status" value="1"/>
</dbReference>
<dbReference type="NCBIfam" id="TIGR00420">
    <property type="entry name" value="trmU"/>
    <property type="match status" value="1"/>
</dbReference>
<dbReference type="PANTHER" id="PTHR11933:SF5">
    <property type="entry name" value="MITOCHONDRIAL TRNA-SPECIFIC 2-THIOURIDYLASE 1"/>
    <property type="match status" value="1"/>
</dbReference>
<dbReference type="PANTHER" id="PTHR11933">
    <property type="entry name" value="TRNA 5-METHYLAMINOMETHYL-2-THIOURIDYLATE -METHYLTRANSFERASE"/>
    <property type="match status" value="1"/>
</dbReference>
<dbReference type="Pfam" id="PF03054">
    <property type="entry name" value="tRNA_Me_trans"/>
    <property type="match status" value="1"/>
</dbReference>
<dbReference type="Pfam" id="PF20258">
    <property type="entry name" value="tRNA_Me_trans_C"/>
    <property type="match status" value="1"/>
</dbReference>
<dbReference type="Pfam" id="PF20259">
    <property type="entry name" value="tRNA_Me_trans_M"/>
    <property type="match status" value="1"/>
</dbReference>
<dbReference type="SUPFAM" id="SSF52402">
    <property type="entry name" value="Adenine nucleotide alpha hydrolases-like"/>
    <property type="match status" value="1"/>
</dbReference>